<feature type="chain" id="PRO_1000012213" description="Lipoyl synthase">
    <location>
        <begin position="1"/>
        <end position="321"/>
    </location>
</feature>
<feature type="domain" description="Radical SAM core" evidence="2">
    <location>
        <begin position="80"/>
        <end position="297"/>
    </location>
</feature>
<feature type="binding site" evidence="1">
    <location>
        <position position="68"/>
    </location>
    <ligand>
        <name>[4Fe-4S] cluster</name>
        <dbReference type="ChEBI" id="CHEBI:49883"/>
        <label>1</label>
    </ligand>
</feature>
<feature type="binding site" evidence="1">
    <location>
        <position position="73"/>
    </location>
    <ligand>
        <name>[4Fe-4S] cluster</name>
        <dbReference type="ChEBI" id="CHEBI:49883"/>
        <label>1</label>
    </ligand>
</feature>
<feature type="binding site" evidence="1">
    <location>
        <position position="79"/>
    </location>
    <ligand>
        <name>[4Fe-4S] cluster</name>
        <dbReference type="ChEBI" id="CHEBI:49883"/>
        <label>1</label>
    </ligand>
</feature>
<feature type="binding site" evidence="1">
    <location>
        <position position="94"/>
    </location>
    <ligand>
        <name>[4Fe-4S] cluster</name>
        <dbReference type="ChEBI" id="CHEBI:49883"/>
        <label>2</label>
        <note>4Fe-4S-S-AdoMet</note>
    </ligand>
</feature>
<feature type="binding site" evidence="1">
    <location>
        <position position="98"/>
    </location>
    <ligand>
        <name>[4Fe-4S] cluster</name>
        <dbReference type="ChEBI" id="CHEBI:49883"/>
        <label>2</label>
        <note>4Fe-4S-S-AdoMet</note>
    </ligand>
</feature>
<feature type="binding site" evidence="1">
    <location>
        <position position="101"/>
    </location>
    <ligand>
        <name>[4Fe-4S] cluster</name>
        <dbReference type="ChEBI" id="CHEBI:49883"/>
        <label>2</label>
        <note>4Fe-4S-S-AdoMet</note>
    </ligand>
</feature>
<feature type="binding site" evidence="1">
    <location>
        <position position="308"/>
    </location>
    <ligand>
        <name>[4Fe-4S] cluster</name>
        <dbReference type="ChEBI" id="CHEBI:49883"/>
        <label>1</label>
    </ligand>
</feature>
<name>LIPA_ECOK1</name>
<reference key="1">
    <citation type="journal article" date="2007" name="J. Bacteriol.">
        <title>The genome sequence of avian pathogenic Escherichia coli strain O1:K1:H7 shares strong similarities with human extraintestinal pathogenic E. coli genomes.</title>
        <authorList>
            <person name="Johnson T.J."/>
            <person name="Kariyawasam S."/>
            <person name="Wannemuehler Y."/>
            <person name="Mangiamele P."/>
            <person name="Johnson S.J."/>
            <person name="Doetkott C."/>
            <person name="Skyberg J.A."/>
            <person name="Lynne A.M."/>
            <person name="Johnson J.R."/>
            <person name="Nolan L.K."/>
        </authorList>
    </citation>
    <scope>NUCLEOTIDE SEQUENCE [LARGE SCALE GENOMIC DNA]</scope>
</reference>
<evidence type="ECO:0000255" key="1">
    <source>
        <dbReference type="HAMAP-Rule" id="MF_00206"/>
    </source>
</evidence>
<evidence type="ECO:0000255" key="2">
    <source>
        <dbReference type="PROSITE-ProRule" id="PRU01266"/>
    </source>
</evidence>
<comment type="function">
    <text evidence="1">Catalyzes the radical-mediated insertion of two sulfur atoms into the C-6 and C-8 positions of the octanoyl moiety bound to the lipoyl domains of lipoate-dependent enzymes, thereby converting the octanoylated domains into lipoylated derivatives.</text>
</comment>
<comment type="catalytic activity">
    <reaction evidence="1">
        <text>[[Fe-S] cluster scaffold protein carrying a second [4Fe-4S](2+) cluster] + N(6)-octanoyl-L-lysyl-[protein] + 2 oxidized [2Fe-2S]-[ferredoxin] + 2 S-adenosyl-L-methionine + 4 H(+) = [[Fe-S] cluster scaffold protein] + N(6)-[(R)-dihydrolipoyl]-L-lysyl-[protein] + 4 Fe(3+) + 2 hydrogen sulfide + 2 5'-deoxyadenosine + 2 L-methionine + 2 reduced [2Fe-2S]-[ferredoxin]</text>
        <dbReference type="Rhea" id="RHEA:16585"/>
        <dbReference type="Rhea" id="RHEA-COMP:9928"/>
        <dbReference type="Rhea" id="RHEA-COMP:10000"/>
        <dbReference type="Rhea" id="RHEA-COMP:10001"/>
        <dbReference type="Rhea" id="RHEA-COMP:10475"/>
        <dbReference type="Rhea" id="RHEA-COMP:14568"/>
        <dbReference type="Rhea" id="RHEA-COMP:14569"/>
        <dbReference type="ChEBI" id="CHEBI:15378"/>
        <dbReference type="ChEBI" id="CHEBI:17319"/>
        <dbReference type="ChEBI" id="CHEBI:29034"/>
        <dbReference type="ChEBI" id="CHEBI:29919"/>
        <dbReference type="ChEBI" id="CHEBI:33722"/>
        <dbReference type="ChEBI" id="CHEBI:33737"/>
        <dbReference type="ChEBI" id="CHEBI:33738"/>
        <dbReference type="ChEBI" id="CHEBI:57844"/>
        <dbReference type="ChEBI" id="CHEBI:59789"/>
        <dbReference type="ChEBI" id="CHEBI:78809"/>
        <dbReference type="ChEBI" id="CHEBI:83100"/>
        <dbReference type="EC" id="2.8.1.8"/>
    </reaction>
</comment>
<comment type="cofactor">
    <cofactor evidence="1">
        <name>[4Fe-4S] cluster</name>
        <dbReference type="ChEBI" id="CHEBI:49883"/>
    </cofactor>
    <text evidence="1">Binds 2 [4Fe-4S] clusters per subunit. One cluster is coordinated with 3 cysteines and an exchangeable S-adenosyl-L-methionine.</text>
</comment>
<comment type="pathway">
    <text evidence="1">Protein modification; protein lipoylation via endogenous pathway; protein N(6)-(lipoyl)lysine from octanoyl-[acyl-carrier-protein]: step 2/2.</text>
</comment>
<comment type="subcellular location">
    <subcellularLocation>
        <location evidence="1">Cytoplasm</location>
    </subcellularLocation>
</comment>
<comment type="similarity">
    <text evidence="1">Belongs to the radical SAM superfamily. Lipoyl synthase family.</text>
</comment>
<protein>
    <recommendedName>
        <fullName evidence="1">Lipoyl synthase</fullName>
        <ecNumber evidence="1">2.8.1.8</ecNumber>
    </recommendedName>
    <alternativeName>
        <fullName evidence="1">Lip-syn</fullName>
        <shortName evidence="1">LS</shortName>
    </alternativeName>
    <alternativeName>
        <fullName evidence="1">Lipoate synthase</fullName>
    </alternativeName>
    <alternativeName>
        <fullName evidence="1">Lipoic acid synthase</fullName>
    </alternativeName>
    <alternativeName>
        <fullName evidence="1">Sulfur insertion protein LipA</fullName>
    </alternativeName>
</protein>
<gene>
    <name evidence="1" type="primary">lipA</name>
    <name type="ordered locus">Ecok1_05490</name>
    <name type="ORF">APECO1_1427</name>
</gene>
<keyword id="KW-0004">4Fe-4S</keyword>
<keyword id="KW-0963">Cytoplasm</keyword>
<keyword id="KW-0408">Iron</keyword>
<keyword id="KW-0411">Iron-sulfur</keyword>
<keyword id="KW-0479">Metal-binding</keyword>
<keyword id="KW-1185">Reference proteome</keyword>
<keyword id="KW-0949">S-adenosyl-L-methionine</keyword>
<keyword id="KW-0808">Transferase</keyword>
<accession>A1A8Q3</accession>
<dbReference type="EC" id="2.8.1.8" evidence="1"/>
<dbReference type="EMBL" id="CP000468">
    <property type="protein sequence ID" value="ABJ00043.1"/>
    <property type="molecule type" value="Genomic_DNA"/>
</dbReference>
<dbReference type="RefSeq" id="WP_000042632.1">
    <property type="nucleotide sequence ID" value="NZ_CADILS010000006.1"/>
</dbReference>
<dbReference type="SMR" id="A1A8Q3"/>
<dbReference type="GeneID" id="93776854"/>
<dbReference type="KEGG" id="ecv:APECO1_1427"/>
<dbReference type="HOGENOM" id="CLU_033144_2_1_6"/>
<dbReference type="UniPathway" id="UPA00538">
    <property type="reaction ID" value="UER00593"/>
</dbReference>
<dbReference type="Proteomes" id="UP000008216">
    <property type="component" value="Chromosome"/>
</dbReference>
<dbReference type="GO" id="GO:0005737">
    <property type="term" value="C:cytoplasm"/>
    <property type="evidence" value="ECO:0007669"/>
    <property type="project" value="UniProtKB-SubCell"/>
</dbReference>
<dbReference type="GO" id="GO:0051539">
    <property type="term" value="F:4 iron, 4 sulfur cluster binding"/>
    <property type="evidence" value="ECO:0007669"/>
    <property type="project" value="UniProtKB-UniRule"/>
</dbReference>
<dbReference type="GO" id="GO:0016992">
    <property type="term" value="F:lipoate synthase activity"/>
    <property type="evidence" value="ECO:0007669"/>
    <property type="project" value="UniProtKB-UniRule"/>
</dbReference>
<dbReference type="GO" id="GO:0046872">
    <property type="term" value="F:metal ion binding"/>
    <property type="evidence" value="ECO:0007669"/>
    <property type="project" value="UniProtKB-KW"/>
</dbReference>
<dbReference type="CDD" id="cd01335">
    <property type="entry name" value="Radical_SAM"/>
    <property type="match status" value="1"/>
</dbReference>
<dbReference type="FunFam" id="3.20.20.70:FF:000023">
    <property type="entry name" value="Lipoyl synthase"/>
    <property type="match status" value="1"/>
</dbReference>
<dbReference type="Gene3D" id="3.20.20.70">
    <property type="entry name" value="Aldolase class I"/>
    <property type="match status" value="1"/>
</dbReference>
<dbReference type="HAMAP" id="MF_00206">
    <property type="entry name" value="Lipoyl_synth"/>
    <property type="match status" value="1"/>
</dbReference>
<dbReference type="InterPro" id="IPR013785">
    <property type="entry name" value="Aldolase_TIM"/>
</dbReference>
<dbReference type="InterPro" id="IPR006638">
    <property type="entry name" value="Elp3/MiaA/NifB-like_rSAM"/>
</dbReference>
<dbReference type="InterPro" id="IPR031691">
    <property type="entry name" value="LIAS_N"/>
</dbReference>
<dbReference type="InterPro" id="IPR003698">
    <property type="entry name" value="Lipoyl_synth"/>
</dbReference>
<dbReference type="InterPro" id="IPR007197">
    <property type="entry name" value="rSAM"/>
</dbReference>
<dbReference type="NCBIfam" id="TIGR00510">
    <property type="entry name" value="lipA"/>
    <property type="match status" value="1"/>
</dbReference>
<dbReference type="NCBIfam" id="NF004019">
    <property type="entry name" value="PRK05481.1"/>
    <property type="match status" value="1"/>
</dbReference>
<dbReference type="NCBIfam" id="NF009544">
    <property type="entry name" value="PRK12928.1"/>
    <property type="match status" value="1"/>
</dbReference>
<dbReference type="PANTHER" id="PTHR10949">
    <property type="entry name" value="LIPOYL SYNTHASE"/>
    <property type="match status" value="1"/>
</dbReference>
<dbReference type="PANTHER" id="PTHR10949:SF0">
    <property type="entry name" value="LIPOYL SYNTHASE, MITOCHONDRIAL"/>
    <property type="match status" value="1"/>
</dbReference>
<dbReference type="Pfam" id="PF16881">
    <property type="entry name" value="LIAS_N"/>
    <property type="match status" value="1"/>
</dbReference>
<dbReference type="Pfam" id="PF04055">
    <property type="entry name" value="Radical_SAM"/>
    <property type="match status" value="1"/>
</dbReference>
<dbReference type="PIRSF" id="PIRSF005963">
    <property type="entry name" value="Lipoyl_synth"/>
    <property type="match status" value="1"/>
</dbReference>
<dbReference type="SFLD" id="SFLDF00271">
    <property type="entry name" value="lipoyl_synthase"/>
    <property type="match status" value="1"/>
</dbReference>
<dbReference type="SFLD" id="SFLDG01058">
    <property type="entry name" value="lipoyl_synthase_like"/>
    <property type="match status" value="1"/>
</dbReference>
<dbReference type="SMART" id="SM00729">
    <property type="entry name" value="Elp3"/>
    <property type="match status" value="1"/>
</dbReference>
<dbReference type="SUPFAM" id="SSF102114">
    <property type="entry name" value="Radical SAM enzymes"/>
    <property type="match status" value="1"/>
</dbReference>
<dbReference type="PROSITE" id="PS51918">
    <property type="entry name" value="RADICAL_SAM"/>
    <property type="match status" value="1"/>
</dbReference>
<proteinExistence type="inferred from homology"/>
<organism>
    <name type="scientific">Escherichia coli O1:K1 / APEC</name>
    <dbReference type="NCBI Taxonomy" id="405955"/>
    <lineage>
        <taxon>Bacteria</taxon>
        <taxon>Pseudomonadati</taxon>
        <taxon>Pseudomonadota</taxon>
        <taxon>Gammaproteobacteria</taxon>
        <taxon>Enterobacterales</taxon>
        <taxon>Enterobacteriaceae</taxon>
        <taxon>Escherichia</taxon>
    </lineage>
</organism>
<sequence>MSKPIVMERGVKYRDADKMALIPVKNVATEREALLRKPEWMKIKLPADSTRIQGIKAAMRKNGLHSVCEEASCPNLAECFNHGTATFMILGAICTRRCPFCDVAHGRPVAPDANEPVKLAQTIADMALRYVVITSVDRDDLRDGGAQHFADCITAIREKSPQIKIETLVPDFRGRMDRALDILTATPPDVFNHNLENVPRIYRQVRPGADYNWSLKLLERFKEAHPEIPTKSGLMVGLGETNEEIIEVMRDLRRHGVTMLTLGQYLQPSRHHLPVQRYVSPDEFDEMKAEALAMGFTHAACGPFVRSSYHADLQAKGMEVK</sequence>